<comment type="function">
    <text evidence="5">Catalyzes the oxidative deamination of primary and some secondary amines such as neurotransmitters, and exogenous amines including the tertiary amine, neurotoxin 1-methyl-4-phenyl-1,2,3,6-tetrahydropyridine (MPTP), with concomitant reduction of oxygen to hydrogen peroxide and participates in the metabolism of neuroactive and vasoactive amines in the central nervous system and peripheral tissues (PubMed:20493079). Preferentially degrades benzylamine and phenylethylamine (PubMed:20493079).</text>
</comment>
<comment type="catalytic activity">
    <reaction evidence="5">
        <text>a secondary aliphatic amine + O2 + H2O = a primary amine + an aldehyde + H2O2</text>
        <dbReference type="Rhea" id="RHEA:26414"/>
        <dbReference type="ChEBI" id="CHEBI:15377"/>
        <dbReference type="ChEBI" id="CHEBI:15379"/>
        <dbReference type="ChEBI" id="CHEBI:16240"/>
        <dbReference type="ChEBI" id="CHEBI:17478"/>
        <dbReference type="ChEBI" id="CHEBI:58855"/>
        <dbReference type="ChEBI" id="CHEBI:65296"/>
        <dbReference type="EC" id="1.4.3.4"/>
    </reaction>
</comment>
<comment type="catalytic activity">
    <reaction evidence="5">
        <text>(R)-adrenaline + O2 + H2O = (R)-3,4-dihydroxymandelaldehyde + methylamine + H2O2</text>
        <dbReference type="Rhea" id="RHEA:51168"/>
        <dbReference type="ChEBI" id="CHEBI:15377"/>
        <dbReference type="ChEBI" id="CHEBI:15379"/>
        <dbReference type="ChEBI" id="CHEBI:16240"/>
        <dbReference type="ChEBI" id="CHEBI:59338"/>
        <dbReference type="ChEBI" id="CHEBI:71406"/>
        <dbReference type="ChEBI" id="CHEBI:180943"/>
    </reaction>
</comment>
<comment type="catalytic activity">
    <reaction evidence="5 6">
        <text>a primary methyl amine + O2 + H2O = an aldehyde + H2O2 + NH4(+)</text>
        <dbReference type="Rhea" id="RHEA:16153"/>
        <dbReference type="ChEBI" id="CHEBI:15377"/>
        <dbReference type="ChEBI" id="CHEBI:15379"/>
        <dbReference type="ChEBI" id="CHEBI:16240"/>
        <dbReference type="ChEBI" id="CHEBI:17478"/>
        <dbReference type="ChEBI" id="CHEBI:28938"/>
        <dbReference type="ChEBI" id="CHEBI:228804"/>
        <dbReference type="EC" id="1.4.3.21"/>
    </reaction>
    <physiologicalReaction direction="left-to-right" evidence="9">
        <dbReference type="Rhea" id="RHEA:16154"/>
    </physiologicalReaction>
</comment>
<comment type="catalytic activity">
    <reaction evidence="5">
        <text>dopamine + O2 + H2O = 3,4-dihydroxyphenylacetaldehyde + H2O2 + NH4(+)</text>
        <dbReference type="Rhea" id="RHEA:27946"/>
        <dbReference type="ChEBI" id="CHEBI:15377"/>
        <dbReference type="ChEBI" id="CHEBI:15379"/>
        <dbReference type="ChEBI" id="CHEBI:16240"/>
        <dbReference type="ChEBI" id="CHEBI:27978"/>
        <dbReference type="ChEBI" id="CHEBI:28938"/>
        <dbReference type="ChEBI" id="CHEBI:59905"/>
    </reaction>
</comment>
<comment type="catalytic activity">
    <reaction evidence="5">
        <text>tyramine + O2 + H2O = (4-hydroxyphenyl)acetaldehyde + H2O2 + NH4(+)</text>
        <dbReference type="Rhea" id="RHEA:30591"/>
        <dbReference type="ChEBI" id="CHEBI:15377"/>
        <dbReference type="ChEBI" id="CHEBI:15379"/>
        <dbReference type="ChEBI" id="CHEBI:15621"/>
        <dbReference type="ChEBI" id="CHEBI:16240"/>
        <dbReference type="ChEBI" id="CHEBI:28938"/>
        <dbReference type="ChEBI" id="CHEBI:327995"/>
    </reaction>
</comment>
<comment type="catalytic activity">
    <reaction evidence="5">
        <text>(R)-noradrenaline + O2 + H2O = (R)-3,4-dihydroxymandelaldehyde + H2O2 + NH4(+)</text>
        <dbReference type="Rhea" id="RHEA:69076"/>
        <dbReference type="ChEBI" id="CHEBI:15377"/>
        <dbReference type="ChEBI" id="CHEBI:15379"/>
        <dbReference type="ChEBI" id="CHEBI:16240"/>
        <dbReference type="ChEBI" id="CHEBI:28938"/>
        <dbReference type="ChEBI" id="CHEBI:72587"/>
        <dbReference type="ChEBI" id="CHEBI:180943"/>
    </reaction>
</comment>
<comment type="catalytic activity">
    <reaction evidence="2">
        <text>benzylamine + O2 + H2O = benzaldehyde + H2O2 + NH4(+)</text>
        <dbReference type="Rhea" id="RHEA:59424"/>
        <dbReference type="ChEBI" id="CHEBI:15377"/>
        <dbReference type="ChEBI" id="CHEBI:15379"/>
        <dbReference type="ChEBI" id="CHEBI:16240"/>
        <dbReference type="ChEBI" id="CHEBI:17169"/>
        <dbReference type="ChEBI" id="CHEBI:28938"/>
        <dbReference type="ChEBI" id="CHEBI:225238"/>
    </reaction>
    <physiologicalReaction direction="left-to-right" evidence="2">
        <dbReference type="Rhea" id="RHEA:59425"/>
    </physiologicalReaction>
</comment>
<comment type="catalytic activity">
    <reaction evidence="5">
        <text>2-phenylethylamine + O2 + H2O = 2-phenylacetaldehyde + H2O2 + NH4(+)</text>
        <dbReference type="Rhea" id="RHEA:25265"/>
        <dbReference type="ChEBI" id="CHEBI:15377"/>
        <dbReference type="ChEBI" id="CHEBI:15379"/>
        <dbReference type="ChEBI" id="CHEBI:16240"/>
        <dbReference type="ChEBI" id="CHEBI:16424"/>
        <dbReference type="ChEBI" id="CHEBI:28938"/>
        <dbReference type="ChEBI" id="CHEBI:225237"/>
    </reaction>
</comment>
<comment type="catalytic activity">
    <reaction evidence="6">
        <text>N-acetylputrescine + O2 + H2O = 4-acetamidobutanal + H2O2 + NH4(+)</text>
        <dbReference type="Rhea" id="RHEA:70283"/>
        <dbReference type="ChEBI" id="CHEBI:7386"/>
        <dbReference type="ChEBI" id="CHEBI:15377"/>
        <dbReference type="ChEBI" id="CHEBI:15379"/>
        <dbReference type="ChEBI" id="CHEBI:16240"/>
        <dbReference type="ChEBI" id="CHEBI:28938"/>
        <dbReference type="ChEBI" id="CHEBI:58263"/>
    </reaction>
    <physiologicalReaction direction="left-to-right" evidence="6">
        <dbReference type="Rhea" id="RHEA:70284"/>
    </physiologicalReaction>
</comment>
<comment type="cofactor">
    <cofactor evidence="2">
        <name>FAD</name>
        <dbReference type="ChEBI" id="CHEBI:57692"/>
    </cofactor>
</comment>
<comment type="biophysicochemical properties">
    <kinetics>
        <KM evidence="5">840 uM for (R)-adrenaline</KM>
        <KM evidence="5">290 uM for dopamine</KM>
        <KM evidence="5">533 uM for serotonin</KM>
        <KM evidence="5">1954 uM for (R)-noradrenaline</KM>
        <KM evidence="5">5 uM for 2-phenylethylamine</KM>
        <KM evidence="5">328 uM for tyramine</KM>
        <Vmax evidence="5">531.0 pmol/min/mg enzyme toward (R)-adrenaline</Vmax>
        <Vmax evidence="5">396.0 pmol/min/mg enzyme toward dopamine</Vmax>
        <Vmax evidence="5">125.0 pmol/min/mg enzyme toward serotonin</Vmax>
        <Vmax evidence="5">383.0 pmol/min/mg enzyme toward (R)-noradrenaline</Vmax>
        <Vmax evidence="5">489.0 pmol/min/mg enzyme toward 2-phenylethylamine</Vmax>
        <Vmax evidence="5">687.0 pmol/min/mg enzyme toward tyramine</Vmax>
    </kinetics>
</comment>
<comment type="subunit">
    <text evidence="1">Monomer, homo- or heterodimer (containing two subunits of similar size). Each subunit contains a covalently bound flavin. Enzymatically active as monomer (By similarity).</text>
</comment>
<comment type="subcellular location">
    <subcellularLocation>
        <location>Mitochondrion outer membrane</location>
        <topology>Single-pass type IV membrane protein</topology>
        <orientation>Cytoplasmic side</orientation>
    </subcellularLocation>
</comment>
<comment type="similarity">
    <text evidence="8">Belongs to the flavin monoamine oxidase family.</text>
</comment>
<proteinExistence type="evidence at protein level"/>
<gene>
    <name evidence="10" type="primary">Maob</name>
</gene>
<dbReference type="EC" id="1.4.3.21" evidence="5 6"/>
<dbReference type="EC" id="1.4.3.4" evidence="5"/>
<dbReference type="EMBL" id="M23601">
    <property type="protein sequence ID" value="AAA41566.1"/>
    <property type="molecule type" value="mRNA"/>
</dbReference>
<dbReference type="EMBL" id="BC089814">
    <property type="protein sequence ID" value="AAH89814.1"/>
    <property type="molecule type" value="mRNA"/>
</dbReference>
<dbReference type="PIR" id="A31870">
    <property type="entry name" value="A31870"/>
</dbReference>
<dbReference type="RefSeq" id="NP_037330.1">
    <property type="nucleotide sequence ID" value="NM_013198.1"/>
</dbReference>
<dbReference type="SMR" id="P19643"/>
<dbReference type="BioGRID" id="247778">
    <property type="interactions" value="1"/>
</dbReference>
<dbReference type="FunCoup" id="P19643">
    <property type="interactions" value="129"/>
</dbReference>
<dbReference type="STRING" id="10116.ENSRNOP00000043466"/>
<dbReference type="BindingDB" id="P19643"/>
<dbReference type="ChEMBL" id="CHEMBL2993"/>
<dbReference type="DrugCentral" id="P19643"/>
<dbReference type="GuidetoPHARMACOLOGY" id="2490"/>
<dbReference type="iPTMnet" id="P19643"/>
<dbReference type="PhosphoSitePlus" id="P19643"/>
<dbReference type="PaxDb" id="10116-ENSRNOP00000043466"/>
<dbReference type="DNASU" id="25750"/>
<dbReference type="Ensembl" id="ENSRNOT00000044009.6">
    <property type="protein sequence ID" value="ENSRNOP00000043466.4"/>
    <property type="gene ID" value="ENSRNOG00000029778.6"/>
</dbReference>
<dbReference type="GeneID" id="25750"/>
<dbReference type="KEGG" id="rno:25750"/>
<dbReference type="UCSC" id="RGD:3041">
    <property type="organism name" value="rat"/>
</dbReference>
<dbReference type="AGR" id="RGD:3041"/>
<dbReference type="CTD" id="4129"/>
<dbReference type="RGD" id="3041">
    <property type="gene designation" value="Maob"/>
</dbReference>
<dbReference type="eggNOG" id="KOG0029">
    <property type="taxonomic scope" value="Eukaryota"/>
</dbReference>
<dbReference type="GeneTree" id="ENSGT00940000161545"/>
<dbReference type="HOGENOM" id="CLU_004498_0_1_1"/>
<dbReference type="InParanoid" id="P19643"/>
<dbReference type="OMA" id="PIHWAGT"/>
<dbReference type="OrthoDB" id="7777654at2759"/>
<dbReference type="PhylomeDB" id="P19643"/>
<dbReference type="BRENDA" id="1.4.3.4">
    <property type="organism ID" value="5301"/>
</dbReference>
<dbReference type="Reactome" id="R-RNO-141333">
    <property type="pathway name" value="Biogenic amines are oxidatively deaminated to aldehydes by MAOA and MAOB"/>
</dbReference>
<dbReference type="SABIO-RK" id="P19643"/>
<dbReference type="PRO" id="PR:P19643"/>
<dbReference type="Proteomes" id="UP000002494">
    <property type="component" value="Chromosome X"/>
</dbReference>
<dbReference type="Bgee" id="ENSRNOG00000029778">
    <property type="expression patterns" value="Expressed in liver and 19 other cell types or tissues"/>
</dbReference>
<dbReference type="GO" id="GO:0030425">
    <property type="term" value="C:dendrite"/>
    <property type="evidence" value="ECO:0000314"/>
    <property type="project" value="RGD"/>
</dbReference>
<dbReference type="GO" id="GO:0005741">
    <property type="term" value="C:mitochondrial outer membrane"/>
    <property type="evidence" value="ECO:0000314"/>
    <property type="project" value="RGD"/>
</dbReference>
<dbReference type="GO" id="GO:0005739">
    <property type="term" value="C:mitochondrion"/>
    <property type="evidence" value="ECO:0000318"/>
    <property type="project" value="GO_Central"/>
</dbReference>
<dbReference type="GO" id="GO:0043025">
    <property type="term" value="C:neuronal cell body"/>
    <property type="evidence" value="ECO:0000314"/>
    <property type="project" value="RGD"/>
</dbReference>
<dbReference type="GO" id="GO:0050660">
    <property type="term" value="F:flavin adenine dinucleotide binding"/>
    <property type="evidence" value="ECO:0000314"/>
    <property type="project" value="RGD"/>
</dbReference>
<dbReference type="GO" id="GO:0042802">
    <property type="term" value="F:identical protein binding"/>
    <property type="evidence" value="ECO:0000353"/>
    <property type="project" value="RGD"/>
</dbReference>
<dbReference type="GO" id="GO:0097621">
    <property type="term" value="F:monoamine oxidase activity"/>
    <property type="evidence" value="ECO:0000314"/>
    <property type="project" value="UniProtKB"/>
</dbReference>
<dbReference type="GO" id="GO:0008131">
    <property type="term" value="F:primary methylamine oxidase activity"/>
    <property type="evidence" value="ECO:0000314"/>
    <property type="project" value="UniProtKB"/>
</dbReference>
<dbReference type="GO" id="GO:0014063">
    <property type="term" value="P:negative regulation of serotonin secretion"/>
    <property type="evidence" value="ECO:0000315"/>
    <property type="project" value="RGD"/>
</dbReference>
<dbReference type="GO" id="GO:0019607">
    <property type="term" value="P:phenylethylamine catabolic process"/>
    <property type="evidence" value="ECO:0000314"/>
    <property type="project" value="RGD"/>
</dbReference>
<dbReference type="GO" id="GO:0045964">
    <property type="term" value="P:positive regulation of dopamine metabolic process"/>
    <property type="evidence" value="ECO:0000315"/>
    <property type="project" value="RGD"/>
</dbReference>
<dbReference type="GO" id="GO:0010044">
    <property type="term" value="P:response to aluminum ion"/>
    <property type="evidence" value="ECO:0000270"/>
    <property type="project" value="RGD"/>
</dbReference>
<dbReference type="GO" id="GO:0051412">
    <property type="term" value="P:response to corticosterone"/>
    <property type="evidence" value="ECO:0000270"/>
    <property type="project" value="RGD"/>
</dbReference>
<dbReference type="GO" id="GO:0045471">
    <property type="term" value="P:response to ethanol"/>
    <property type="evidence" value="ECO:0000270"/>
    <property type="project" value="RGD"/>
</dbReference>
<dbReference type="GO" id="GO:0032496">
    <property type="term" value="P:response to lipopolysaccharide"/>
    <property type="evidence" value="ECO:0000270"/>
    <property type="project" value="RGD"/>
</dbReference>
<dbReference type="GO" id="GO:0010269">
    <property type="term" value="P:response to selenium ion"/>
    <property type="evidence" value="ECO:0000270"/>
    <property type="project" value="RGD"/>
</dbReference>
<dbReference type="GO" id="GO:0048545">
    <property type="term" value="P:response to steroid hormone"/>
    <property type="evidence" value="ECO:0000314"/>
    <property type="project" value="RGD"/>
</dbReference>
<dbReference type="GO" id="GO:0009636">
    <property type="term" value="P:response to toxic substance"/>
    <property type="evidence" value="ECO:0000270"/>
    <property type="project" value="RGD"/>
</dbReference>
<dbReference type="GO" id="GO:0009410">
    <property type="term" value="P:response to xenobiotic stimulus"/>
    <property type="evidence" value="ECO:0000270"/>
    <property type="project" value="RGD"/>
</dbReference>
<dbReference type="FunFam" id="1.10.405.10:FF:000005">
    <property type="entry name" value="Amine oxidase [flavin-containing]"/>
    <property type="match status" value="1"/>
</dbReference>
<dbReference type="Gene3D" id="3.90.660.10">
    <property type="match status" value="1"/>
</dbReference>
<dbReference type="Gene3D" id="6.10.250.130">
    <property type="match status" value="1"/>
</dbReference>
<dbReference type="Gene3D" id="3.50.50.60">
    <property type="entry name" value="FAD/NAD(P)-binding domain"/>
    <property type="match status" value="1"/>
</dbReference>
<dbReference type="Gene3D" id="1.10.405.10">
    <property type="entry name" value="Guanine Nucleotide Dissociation Inhibitor, domain 1"/>
    <property type="match status" value="1"/>
</dbReference>
<dbReference type="InterPro" id="IPR002937">
    <property type="entry name" value="Amino_oxidase"/>
</dbReference>
<dbReference type="InterPro" id="IPR036188">
    <property type="entry name" value="FAD/NAD-bd_sf"/>
</dbReference>
<dbReference type="InterPro" id="IPR001613">
    <property type="entry name" value="Flavin_amine_oxidase"/>
</dbReference>
<dbReference type="InterPro" id="IPR050703">
    <property type="entry name" value="Flavin_MAO"/>
</dbReference>
<dbReference type="PANTHER" id="PTHR43563">
    <property type="entry name" value="AMINE OXIDASE"/>
    <property type="match status" value="1"/>
</dbReference>
<dbReference type="PANTHER" id="PTHR43563:SF1">
    <property type="entry name" value="AMINE OXIDASE [FLAVIN-CONTAINING] B"/>
    <property type="match status" value="1"/>
</dbReference>
<dbReference type="Pfam" id="PF01593">
    <property type="entry name" value="Amino_oxidase"/>
    <property type="match status" value="1"/>
</dbReference>
<dbReference type="PRINTS" id="PR00757">
    <property type="entry name" value="AMINEOXDASEF"/>
</dbReference>
<dbReference type="SUPFAM" id="SSF54373">
    <property type="entry name" value="FAD-linked reductases, C-terminal domain"/>
    <property type="match status" value="1"/>
</dbReference>
<dbReference type="SUPFAM" id="SSF51905">
    <property type="entry name" value="FAD/NAD(P)-binding domain"/>
    <property type="match status" value="1"/>
</dbReference>
<protein>
    <recommendedName>
        <fullName evidence="8">Amine oxidase [flavin-containing] B</fullName>
        <ecNumber evidence="5 6">1.4.3.21</ecNumber>
        <ecNumber evidence="5">1.4.3.4</ecNumber>
    </recommendedName>
    <alternativeName>
        <fullName>Monoamine oxidase type B</fullName>
        <shortName>MAO-B</shortName>
    </alternativeName>
</protein>
<keyword id="KW-0007">Acetylation</keyword>
<keyword id="KW-0274">FAD</keyword>
<keyword id="KW-0285">Flavoprotein</keyword>
<keyword id="KW-0472">Membrane</keyword>
<keyword id="KW-0496">Mitochondrion</keyword>
<keyword id="KW-1000">Mitochondrion outer membrane</keyword>
<keyword id="KW-0560">Oxidoreductase</keyword>
<keyword id="KW-1185">Reference proteome</keyword>
<keyword id="KW-0812">Transmembrane</keyword>
<keyword id="KW-1133">Transmembrane helix</keyword>
<reference key="1">
    <citation type="journal article" date="1988" name="Biochem. Biophys. Res. Commun.">
        <title>Molecular cloning of a cDNA for rat liver monoamine oxidase B.</title>
        <authorList>
            <person name="Ito A."/>
            <person name="Kuwahara T."/>
            <person name="Inadome S."/>
            <person name="Sagara Y."/>
        </authorList>
    </citation>
    <scope>NUCLEOTIDE SEQUENCE [MRNA]</scope>
    <source>
        <tissue>Liver</tissue>
    </source>
</reference>
<reference key="2">
    <citation type="journal article" date="2004" name="Genome Res.">
        <title>The status, quality, and expansion of the NIH full-length cDNA project: the Mammalian Gene Collection (MGC).</title>
        <authorList>
            <consortium name="The MGC Project Team"/>
        </authorList>
    </citation>
    <scope>NUCLEOTIDE SEQUENCE [LARGE SCALE MRNA]</scope>
    <source>
        <tissue>Liver</tissue>
    </source>
</reference>
<reference key="3">
    <citation type="journal article" date="1974" name="Biochem. J.">
        <title>Putrescine catabolism in mammalian brain.</title>
        <authorList>
            <person name="Seiler N."/>
            <person name="Al-Therib M.J."/>
        </authorList>
    </citation>
    <scope>FUNCTION</scope>
    <scope>CATALYTIC ACTIVITY</scope>
</reference>
<reference key="4">
    <citation type="journal article" date="1984" name="Biochem. Biophys. Res. Commun.">
        <title>Metabolism of the neurotoxic tertiary amine, MPTP, by brain monoamine oxidase.</title>
        <authorList>
            <person name="Chiba K."/>
            <person name="Trevor A."/>
            <person name="Castagnoli N. Jr."/>
        </authorList>
    </citation>
    <scope>FUNCTION</scope>
    <scope>BIOPHYSICOCHEMICAL PROPERTIES</scope>
</reference>
<reference key="5">
    <citation type="journal article" date="1986" name="Neurochem. Int.">
        <title>The oxidation of adrenaline and noradrenaline by the two forms of monoamine oxidase from human and rat brain.</title>
        <authorList>
            <person name="O'Carroll A.M."/>
            <person name="Bardsley M.E."/>
            <person name="Tipton K.F."/>
        </authorList>
    </citation>
    <scope>FUNCTION</scope>
    <scope>CATALYTIC ACTIVITY</scope>
    <scope>BIOPHYSICOCHEMICAL PROPERTIES</scope>
</reference>
<reference key="6">
    <citation type="journal article" date="1997" name="J. Biol. Chem.">
        <title>A key amino acid responsible for substrate selectivity of monoamine oxidase A and B.</title>
        <authorList>
            <person name="Tsugeno Y."/>
            <person name="Ito A."/>
        </authorList>
    </citation>
    <scope>MUTAGENESIS OF ILE-199</scope>
</reference>
<name>AOFB_RAT</name>
<organism>
    <name type="scientific">Rattus norvegicus</name>
    <name type="common">Rat</name>
    <dbReference type="NCBI Taxonomy" id="10116"/>
    <lineage>
        <taxon>Eukaryota</taxon>
        <taxon>Metazoa</taxon>
        <taxon>Chordata</taxon>
        <taxon>Craniata</taxon>
        <taxon>Vertebrata</taxon>
        <taxon>Euteleostomi</taxon>
        <taxon>Mammalia</taxon>
        <taxon>Eutheria</taxon>
        <taxon>Euarchontoglires</taxon>
        <taxon>Glires</taxon>
        <taxon>Rodentia</taxon>
        <taxon>Myomorpha</taxon>
        <taxon>Muroidea</taxon>
        <taxon>Muridae</taxon>
        <taxon>Murinae</taxon>
        <taxon>Rattus</taxon>
    </lineage>
</organism>
<evidence type="ECO:0000250" key="1"/>
<evidence type="ECO:0000250" key="2">
    <source>
        <dbReference type="UniProtKB" id="P27338"/>
    </source>
</evidence>
<evidence type="ECO:0000250" key="3">
    <source>
        <dbReference type="UniProtKB" id="P56560"/>
    </source>
</evidence>
<evidence type="ECO:0000250" key="4">
    <source>
        <dbReference type="UniProtKB" id="Q8BW75"/>
    </source>
</evidence>
<evidence type="ECO:0000269" key="5">
    <source>
    </source>
</evidence>
<evidence type="ECO:0000269" key="6">
    <source>
    </source>
</evidence>
<evidence type="ECO:0000269" key="7">
    <source>
    </source>
</evidence>
<evidence type="ECO:0000305" key="8"/>
<evidence type="ECO:0000305" key="9">
    <source>
    </source>
</evidence>
<evidence type="ECO:0000312" key="10">
    <source>
        <dbReference type="RGD" id="3041"/>
    </source>
</evidence>
<feature type="initiator methionine" description="Removed" evidence="3">
    <location>
        <position position="1"/>
    </location>
</feature>
<feature type="chain" id="PRO_0000099863" description="Amine oxidase [flavin-containing] B">
    <location>
        <begin position="2"/>
        <end position="520"/>
    </location>
</feature>
<feature type="topological domain" description="Cytoplasmic" evidence="1">
    <location>
        <begin position="2"/>
        <end position="489"/>
    </location>
</feature>
<feature type="transmembrane region" description="Helical; Anchor for type IV membrane protein" evidence="1">
    <location>
        <begin position="490"/>
        <end position="516"/>
    </location>
</feature>
<feature type="topological domain" description="Mitochondrial intermembrane" evidence="1">
    <location>
        <begin position="517"/>
        <end position="520"/>
    </location>
</feature>
<feature type="site" description="Important for catalytic activity" evidence="1">
    <location>
        <position position="156"/>
    </location>
</feature>
<feature type="site" description="Important for catalytic activity" evidence="1">
    <location>
        <position position="365"/>
    </location>
</feature>
<feature type="site" description="Important for catalytic activity" evidence="1">
    <location>
        <position position="382"/>
    </location>
</feature>
<feature type="modified residue" description="N-acetylserine" evidence="3">
    <location>
        <position position="2"/>
    </location>
</feature>
<feature type="modified residue" description="N6-acetyllysine" evidence="4">
    <location>
        <position position="52"/>
    </location>
</feature>
<feature type="modified residue" description="S-8alpha-FAD cysteine" evidence="2">
    <location>
        <position position="397"/>
    </location>
</feature>
<feature type="mutagenesis site" description="No change in substrate affinity.">
    <original>L</original>
    <variation>H</variation>
    <location>
        <position position="139"/>
    </location>
</feature>
<feature type="mutagenesis site" description="Increased affinity for serotonin and tyramine." evidence="7">
    <original>I</original>
    <variation>F</variation>
    <location>
        <position position="199"/>
    </location>
</feature>
<feature type="sequence conflict" description="In Ref. 1; AAA41566." evidence="8" ref="1">
    <original>R</original>
    <variation>C</variation>
    <location>
        <position position="38"/>
    </location>
</feature>
<feature type="sequence conflict" description="In Ref. 1; AAA41566." evidence="8" ref="1">
    <original>GS</original>
    <variation>AG</variation>
    <location>
        <begin position="335"/>
        <end position="336"/>
    </location>
</feature>
<sequence>MSNKCDVIVVGGGISGMAAAKLLHDCGLSVVVLEARDRVGGRTYTIRNKNVKYVDLGGSYVGPTQNRILRLAKELGLETYKVNEVERLIHFVKGKSYAFRGPFPPVWNPITYLDYNNLWRTMDEMGQEIPSDAPWKAPLAEEWDYMTMKELLDKICWTNSTKQIATLFVNLCVTAETHEVSALWFLWYVKQCGGTTRIISTTNGGQERKFIGGSGQVSERIKDILGDRVKLERPVIHIDQTGENVVVKTLNHEIYEAKYVISAIPPVLGMKIHHSPPLPILRNQLITRVPLGSVIKCMVYYKEPFWRKKDFCGTMVIEGEEAPIAYTLDDTKPDGSCAAIMGFILAHKARKLVRLTKEERLRKLCELYAKVLNSQEALQPVHYEEKNWCEEQYSGGCYTAYFPPGILTQYGRVLRQPVGKIFFAGTETASHWSGYMEGAVEAGERAAREILHAIGKIPEDEIWQPEPESVDVPARPITNTFLERHLPSVPGLLKLLGLTTILSATALGFLAHKKGLFVRF</sequence>
<accession>P19643</accession>
<accession>Q5EBB5</accession>